<comment type="function">
    <text evidence="5 6 8 9 10 11 12 13 14 15 16 17 18 19 20 21 23">Receptor for inositol 1,4,5-trisphosphate, a second messenger that regulates intracellular calcium homeostasis (PubMed:10499793, PubMed:10610772, PubMed:15194811, PubMed:16186564, PubMed:23671426). Binds in vitro to both inositol 1,4,5-trisphosphate (1,4,5-InsP3) and inositol 2,4,5-trisphosphate (2,4,5-InsP3) with high affinity and does not discriminate between the phosphate at 1 or 2 position (PubMed:10610772). Can also bind inositol 1,3,4,5-tetrakisphosphate (1,3,4,5-InsP4) and inositol 4,5-bisphosphate (4,5-InsP2), but with lower affinity (PubMed:10610772). Acts as a timekeeper/rhythm generator via calcium signaling, affecting the defecation cycle and pharyngeal pumping (PubMed:10499793, PubMed:11553721, PubMed:11950942, PubMed:12062062, PubMed:15013747, PubMed:15133127, PubMed:16186564, PubMed:21191812). Affects normal hermaphrodite and male fertility as a participant in intracellular signaling by acting downstream of let-23/lin-3 which regulates ovulation, spermathecal valve dilation and male mating behavior (PubMed:15194811, PubMed:15958491, PubMed:16267094, PubMed:9491893). Important for early embryonic development; controls epidermal cell migration and may also regulate filopodial protrusive activity during epithelial morphogenesis (PubMed:11950942, PubMed:15498499, PubMed:18369461). Component of inositol trisphosphate (IP3)-mediated downstream signaling pathways that controls amphid sensory neuronal (ASH)-mediated response to nose touch and benzaldehyde but not other ASH-mediated responses (PubMed:19730689). Involved in modulating lifespan, acting downstream of transcription factor atf-6 (PubMed:32905769).</text>
</comment>
<comment type="subunit">
    <text evidence="10 12">Interacts with myo-1, myo-2, unc-54/myo-4 and nmy-2. Also interacts with iri-1.</text>
</comment>
<comment type="subcellular location">
    <subcellularLocation>
        <location evidence="6 14">Endoplasmic reticulum membrane</location>
        <topology evidence="1 6 14">Multi-pass membrane protein</topology>
    </subcellularLocation>
</comment>
<comment type="alternative products">
    <event type="alternative promoter"/>
    <event type="alternative splicing"/>
    <isoform>
        <id>Q9Y0A1-1</id>
        <name evidence="7">a</name>
        <sequence type="displayed"/>
    </isoform>
    <isoform>
        <id>Q9Y0A1-2</id>
        <name evidence="7">d</name>
        <sequence type="described" ref="VSP_053337"/>
    </isoform>
    <isoform>
        <id>Q9Y0A1-3</id>
        <name evidence="6 7">e</name>
        <sequence type="described" ref="VSP_053338 VSP_053339 VSP_053340 VSP_053343 VSP_053344"/>
    </isoform>
    <isoform>
        <id>Q9Y0A1-4</id>
        <name evidence="6 7">f</name>
        <sequence type="described" ref="VSP_053338 VSP_053339"/>
    </isoform>
    <isoform>
        <id>Q9Y0A1-5</id>
        <name evidence="27">g</name>
        <sequence type="described" ref="VSP_053338 VSP_053339 VSP_053342 VSP_053345"/>
    </isoform>
    <isoform>
        <id>Q9Y0A1-6</id>
        <name evidence="27">h</name>
        <sequence type="described" ref="VSP_053338 VSP_053339 VSP_053341"/>
    </isoform>
</comment>
<comment type="tissue specificity">
    <text evidence="5 6 7 14 15">Isoform a is expressed in the anterior cells of the pharyngeal terminal bulb, vulva, rectal epithelial cells, spicule protractor muscles of the proctodeum and male-specific neuron CP8 or CP9. Isoform d is expressed in the spermatheca, excretory cell, amphid socket cells, PDA motor neuron, spicule retractor muscles, gubernaculum retractor muscles, posterior oblique muscles, diagonal muscles and the vas deferens. Also expressed in the intestine, pharynx, pharyngeal isthmus, pharyngeal intestinal valve, somatic gonad, hypodermal cells of the vulva, uterine sheath cells, tail, head, LUA motor neuron and the embryonic epidermis (at protein level).</text>
</comment>
<comment type="domain">
    <text evidence="1 6 9">The receptor contains a calcium channel in its C-terminal extremity. Its large N-terminal cytoplasmic region has the ligand-binding site in the N-terminus and modulatory sites in the middle portion immediately upstream of the channel region.</text>
</comment>
<comment type="disruption phenotype">
    <text evidence="9 13 15 19">Disrupted defecation rhythm with reduced pharyngeal pumping in the presence of food resulting in constipation. Disrupted reversal/avoidance response to nose touch. Hermaphrodites display endomitotic oocytes following spermathecal dilation defect and defective ovulation. Loss of male fertility due to defects in turning behavior, spicule insertion and sperm transfer.</text>
</comment>
<comment type="miscellaneous">
    <molecule>Isoform a</molecule>
    <text evidence="7">Produced by alternative promoter usage.</text>
</comment>
<comment type="miscellaneous">
    <molecule>Isoform d</molecule>
    <text evidence="7">Produced by alternative promoter usage.</text>
</comment>
<comment type="miscellaneous">
    <molecule>Isoform e</molecule>
    <text evidence="6 7">Produced by alternative promoter usage and alternative splicing.</text>
</comment>
<comment type="miscellaneous">
    <molecule>Isoform f</molecule>
    <text evidence="6 7">Produced by alternative promoter usage and alternative splicing.</text>
</comment>
<comment type="miscellaneous">
    <molecule>Isoform g</molecule>
    <text evidence="27">Produced by alternative promoter usage and alternative splicing.</text>
</comment>
<comment type="miscellaneous">
    <molecule>Isoform h</molecule>
    <text evidence="27">Produced by alternative promoter usage and alternative splicing.</text>
</comment>
<comment type="similarity">
    <text evidence="2">Belongs to the InsP3 receptor family.</text>
</comment>
<evidence type="ECO:0000250" key="1">
    <source>
        <dbReference type="UniProtKB" id="P11881"/>
    </source>
</evidence>
<evidence type="ECO:0000255" key="2"/>
<evidence type="ECO:0000255" key="3">
    <source>
        <dbReference type="PROSITE-ProRule" id="PRU00131"/>
    </source>
</evidence>
<evidence type="ECO:0000256" key="4">
    <source>
        <dbReference type="SAM" id="MobiDB-lite"/>
    </source>
</evidence>
<evidence type="ECO:0000269" key="5">
    <source>
    </source>
</evidence>
<evidence type="ECO:0000269" key="6">
    <source>
    </source>
</evidence>
<evidence type="ECO:0000269" key="7">
    <source>
    </source>
</evidence>
<evidence type="ECO:0000269" key="8">
    <source>
    </source>
</evidence>
<evidence type="ECO:0000269" key="9">
    <source>
    </source>
</evidence>
<evidence type="ECO:0000269" key="10">
    <source>
    </source>
</evidence>
<evidence type="ECO:0000269" key="11">
    <source>
    </source>
</evidence>
<evidence type="ECO:0000269" key="12">
    <source>
    </source>
</evidence>
<evidence type="ECO:0000269" key="13">
    <source>
    </source>
</evidence>
<evidence type="ECO:0000269" key="14">
    <source>
    </source>
</evidence>
<evidence type="ECO:0000269" key="15">
    <source>
    </source>
</evidence>
<evidence type="ECO:0000269" key="16">
    <source>
    </source>
</evidence>
<evidence type="ECO:0000269" key="17">
    <source>
    </source>
</evidence>
<evidence type="ECO:0000269" key="18">
    <source>
    </source>
</evidence>
<evidence type="ECO:0000269" key="19">
    <source>
    </source>
</evidence>
<evidence type="ECO:0000269" key="20">
    <source>
    </source>
</evidence>
<evidence type="ECO:0000269" key="21">
    <source>
    </source>
</evidence>
<evidence type="ECO:0000269" key="22">
    <source>
    </source>
</evidence>
<evidence type="ECO:0000269" key="23">
    <source>
    </source>
</evidence>
<evidence type="ECO:0000303" key="24">
    <source>
    </source>
</evidence>
<evidence type="ECO:0000303" key="25">
    <source>
    </source>
</evidence>
<evidence type="ECO:0000303" key="26">
    <source>
    </source>
</evidence>
<evidence type="ECO:0000305" key="27"/>
<evidence type="ECO:0000312" key="28">
    <source>
        <dbReference type="EMBL" id="AAF05302.1"/>
    </source>
</evidence>
<evidence type="ECO:0000312" key="29">
    <source>
        <dbReference type="EMBL" id="CAB45861.1"/>
    </source>
</evidence>
<evidence type="ECO:0000312" key="30">
    <source>
        <dbReference type="EMBL" id="CCD63763.1"/>
    </source>
</evidence>
<evidence type="ECO:0000312" key="31">
    <source>
        <dbReference type="WormBase" id="F33D4.2a"/>
    </source>
</evidence>
<protein>
    <recommendedName>
        <fullName evidence="24">Inositol 1,4,5-trisphosphate receptor itr-1</fullName>
    </recommendedName>
    <alternativeName>
        <fullName evidence="24">IP3 receptor</fullName>
        <shortName evidence="24">IP3R</shortName>
        <shortName evidence="25">InsP3R</shortName>
    </alternativeName>
    <alternativeName>
        <fullName evidence="26">LET-23 fertility effector 1</fullName>
    </alternativeName>
</protein>
<proteinExistence type="evidence at protein level"/>
<name>ITPR_CAEEL</name>
<gene>
    <name evidence="30 31" type="primary">itr-1</name>
    <name evidence="24" type="synonym">dec-4</name>
    <name evidence="26" type="synonym">lfe-1</name>
    <name type="ORF">F33D4.2</name>
</gene>
<feature type="chain" id="PRO_0000424150" description="Inositol 1,4,5-trisphosphate receptor itr-1">
    <location>
        <begin position="1"/>
        <end position="2892"/>
    </location>
</feature>
<feature type="topological domain" description="Cytoplasmic" evidence="2">
    <location>
        <begin position="1"/>
        <end position="2475"/>
    </location>
</feature>
<feature type="transmembrane region" description="Helical" evidence="2">
    <location>
        <begin position="2476"/>
        <end position="2496"/>
    </location>
</feature>
<feature type="topological domain" description="Extracellular" evidence="2">
    <location>
        <begin position="2497"/>
        <end position="2514"/>
    </location>
</feature>
<feature type="transmembrane region" description="Helical" evidence="2">
    <location>
        <begin position="2515"/>
        <end position="2535"/>
    </location>
</feature>
<feature type="topological domain" description="Cytoplasmic" evidence="2">
    <location>
        <begin position="2536"/>
        <end position="2572"/>
    </location>
</feature>
<feature type="transmembrane region" description="Helical" evidence="2">
    <location>
        <begin position="2573"/>
        <end position="2593"/>
    </location>
</feature>
<feature type="topological domain" description="Extracellular" evidence="2">
    <location>
        <begin position="2594"/>
        <end position="2615"/>
    </location>
</feature>
<feature type="transmembrane region" description="Helical" evidence="2">
    <location>
        <begin position="2616"/>
        <end position="2636"/>
    </location>
</feature>
<feature type="topological domain" description="Cytoplasmic" evidence="2">
    <location>
        <begin position="2637"/>
        <end position="2735"/>
    </location>
</feature>
<feature type="transmembrane region" description="Helical" evidence="2">
    <location>
        <begin position="2736"/>
        <end position="2756"/>
    </location>
</feature>
<feature type="topological domain" description="Extracellular" evidence="2">
    <location>
        <begin position="2757"/>
        <end position="2892"/>
    </location>
</feature>
<feature type="domain" description="MIR 1" evidence="3">
    <location>
        <begin position="192"/>
        <end position="246"/>
    </location>
</feature>
<feature type="domain" description="MIR 2" evidence="3">
    <location>
        <begin position="319"/>
        <end position="379"/>
    </location>
</feature>
<feature type="domain" description="MIR 3" evidence="3">
    <location>
        <begin position="386"/>
        <end position="466"/>
    </location>
</feature>
<feature type="domain" description="MIR 4" evidence="3">
    <location>
        <begin position="490"/>
        <end position="551"/>
    </location>
</feature>
<feature type="region of interest" description="Disordered" evidence="4">
    <location>
        <begin position="1030"/>
        <end position="1056"/>
    </location>
</feature>
<feature type="region of interest" description="Disordered" evidence="4">
    <location>
        <begin position="2655"/>
        <end position="2685"/>
    </location>
</feature>
<feature type="compositionally biased region" description="Basic and acidic residues" evidence="4">
    <location>
        <begin position="1034"/>
        <end position="1043"/>
    </location>
</feature>
<feature type="compositionally biased region" description="Polar residues" evidence="4">
    <location>
        <begin position="2655"/>
        <end position="2666"/>
    </location>
</feature>
<feature type="binding site" evidence="1">
    <location>
        <begin position="357"/>
        <end position="361"/>
    </location>
    <ligand>
        <name>1D-myo-inositol 1,4,5-trisphosphate</name>
        <dbReference type="ChEBI" id="CHEBI:203600"/>
    </ligand>
</feature>
<feature type="binding site" evidence="6">
    <location>
        <begin position="625"/>
        <end position="628"/>
    </location>
    <ligand>
        <name>1D-myo-inositol 1,4,5-trisphosphate</name>
        <dbReference type="ChEBI" id="CHEBI:203600"/>
    </ligand>
</feature>
<feature type="binding site" evidence="1">
    <location>
        <begin position="689"/>
        <end position="691"/>
    </location>
    <ligand>
        <name>1D-myo-inositol 1,4,5-trisphosphate</name>
        <dbReference type="ChEBI" id="CHEBI:203600"/>
    </ligand>
</feature>
<feature type="splice variant" id="VSP_053337" description="In isoform d." evidence="25">
    <location>
        <begin position="1"/>
        <end position="56"/>
    </location>
</feature>
<feature type="splice variant" id="VSP_053338" description="In isoform e, isoform f, isoform g and isoform h." evidence="24 25">
    <location>
        <begin position="1"/>
        <end position="46"/>
    </location>
</feature>
<feature type="splice variant" id="VSP_053339" description="In isoform e, isoform f, isoform g and isoform h." evidence="24 25">
    <original>FDFDDFEEQIMRKSS</original>
    <variation>MDYDYRRRVLERNIG</variation>
    <location>
        <begin position="47"/>
        <end position="61"/>
    </location>
</feature>
<feature type="splice variant" id="VSP_053340" description="In isoform e." evidence="25">
    <original>RASLIYSK</original>
    <variation>PPLLSALSQKSRPMLER</variation>
    <location>
        <begin position="423"/>
        <end position="430"/>
    </location>
</feature>
<feature type="splice variant" id="VSP_053341" description="In isoform h." evidence="27">
    <original>K</original>
    <variation>KMSQDSQSDYDSDSSQGPCQIS</variation>
    <location>
        <position position="1730"/>
    </location>
</feature>
<feature type="splice variant" id="VSP_053342" description="In isoform g." evidence="27">
    <original>RLNRQNTLNPGHRLYGTSNSMTEHTSANV</original>
    <variation>PVITLVVETQSSKYAQSWSSTLWNIKLYD</variation>
    <location>
        <begin position="1731"/>
        <end position="1759"/>
    </location>
</feature>
<feature type="splice variant" id="VSP_053345" description="In isoform g." evidence="27">
    <location>
        <begin position="1760"/>
        <end position="2892"/>
    </location>
</feature>
<feature type="splice variant" id="VSP_053343" description="In isoform e." evidence="25">
    <original>G</original>
    <variation>GHRVYNSSVEKG</variation>
    <location>
        <position position="1853"/>
    </location>
</feature>
<feature type="splice variant" id="VSP_053344" description="In isoform e." evidence="25">
    <location>
        <begin position="1998"/>
        <end position="2006"/>
    </location>
</feature>
<feature type="mutagenesis site" description="In n2559; slow developmental rate to adulthood, absence of ovulation, sterility, absence of defecation cycle and intestinal calcium oscillations." evidence="5">
    <original>G</original>
    <variation>E</variation>
    <location>
        <position position="103"/>
    </location>
</feature>
<feature type="mutagenesis site" description="In sy331; reduced fertility and brood size." evidence="8 23">
    <original>R</original>
    <variation>K</variation>
    <location>
        <position position="371"/>
    </location>
</feature>
<feature type="mutagenesis site" description="In sy290; gain of function. 2-fold increase in ligand affinity. Increased velocity of posterior-to-anterior calcium wave. Reduced fertility, hyperactive spermathecal dilation leading to decreased brood size. Extended lifespan." evidence="9 16 22 23">
    <original>R</original>
    <variation>C</variation>
    <location>
        <position position="557"/>
    </location>
</feature>
<feature type="mutagenesis site" description="Abolishes ligand binding; when associated with Q-628." evidence="9">
    <original>K</original>
    <variation>Q</variation>
    <location>
        <position position="625"/>
    </location>
</feature>
<feature type="mutagenesis site" description="Abolishes ligand binding; when associated with Q-625." evidence="9">
    <original>R</original>
    <variation>Q</variation>
    <location>
        <position position="628"/>
    </location>
</feature>
<feature type="mutagenesis site" description="In sy328; reduced fertility and brood size." evidence="8 23">
    <original>S</original>
    <variation>F</variation>
    <location>
        <position position="900"/>
    </location>
</feature>
<feature type="mutagenesis site" description="In sy327; gain of function. Increased velocity of posterior-to-anterior calcium wave and enhanced sheath contractile activity." evidence="13 16">
    <original>L</original>
    <variation>F</variation>
    <location>
        <position position="945"/>
    </location>
</feature>
<feature type="mutagenesis site" description="In sa73; slow developmental rate to adulthood, reduced brood size, slow intestinal calcium oscillations, slower pharyngeal pumping, longer defecation cycle, defective ovulation, reduced myoepithelial sheath contractility and reduced efficiency of sperm transfer. Causes gross mitochondrial morphological changes, consistent with enhanced mitochondrial fusion. Elevated levels of phosphorylation of AMP-activated protein kinase. At semi-permissive temperature of 20 degrees Celsius, suppresses longevity in an atf-6 mutant background." evidence="5 8 9 11 13 15 16 19 22">
    <original>C</original>
    <variation>Y</variation>
    <location>
        <position position="1571"/>
    </location>
</feature>
<dbReference type="EMBL" id="AF168688">
    <property type="protein sequence ID" value="AAF05302.1"/>
    <property type="molecule type" value="mRNA"/>
</dbReference>
<dbReference type="EMBL" id="AJ243179">
    <property type="protein sequence ID" value="CAB45860.1"/>
    <property type="molecule type" value="mRNA"/>
</dbReference>
<dbReference type="EMBL" id="AJ243180">
    <property type="protein sequence ID" value="CAB45861.1"/>
    <property type="molecule type" value="mRNA"/>
</dbReference>
<dbReference type="EMBL" id="AJ243181">
    <property type="protein sequence ID" value="CAB45862.1"/>
    <property type="molecule type" value="mRNA"/>
</dbReference>
<dbReference type="EMBL" id="AJ243182">
    <property type="protein sequence ID" value="CAB45863.1"/>
    <property type="molecule type" value="mRNA"/>
</dbReference>
<dbReference type="EMBL" id="FO080445">
    <property type="protein sequence ID" value="CCD63763.1"/>
    <property type="molecule type" value="Genomic_DNA"/>
</dbReference>
<dbReference type="EMBL" id="FO080445">
    <property type="protein sequence ID" value="CCD63764.1"/>
    <property type="molecule type" value="Genomic_DNA"/>
</dbReference>
<dbReference type="EMBL" id="FO080445">
    <property type="protein sequence ID" value="CCD63765.1"/>
    <property type="molecule type" value="Genomic_DNA"/>
</dbReference>
<dbReference type="EMBL" id="FO080445">
    <property type="protein sequence ID" value="CCD63766.1"/>
    <property type="molecule type" value="Genomic_DNA"/>
</dbReference>
<dbReference type="EMBL" id="FO080445">
    <property type="protein sequence ID" value="CCD63767.1"/>
    <property type="molecule type" value="Genomic_DNA"/>
</dbReference>
<dbReference type="EMBL" id="FO080445">
    <property type="protein sequence ID" value="CCD63775.1"/>
    <property type="molecule type" value="Genomic_DNA"/>
</dbReference>
<dbReference type="RefSeq" id="NP_001023170.1">
    <molecule id="Q9Y0A1-1"/>
    <property type="nucleotide sequence ID" value="NM_001027999.4"/>
</dbReference>
<dbReference type="RefSeq" id="NP_001023171.1">
    <molecule id="Q9Y0A1-2"/>
    <property type="nucleotide sequence ID" value="NM_001028000.5"/>
</dbReference>
<dbReference type="RefSeq" id="NP_001023172.1">
    <molecule id="Q9Y0A1-3"/>
    <property type="nucleotide sequence ID" value="NM_001028001.5"/>
</dbReference>
<dbReference type="RefSeq" id="NP_001023173.1">
    <molecule id="Q9Y0A1-4"/>
    <property type="nucleotide sequence ID" value="NM_001028002.4"/>
</dbReference>
<dbReference type="RefSeq" id="NP_001023174.1">
    <property type="nucleotide sequence ID" value="NM_001028003.2"/>
</dbReference>
<dbReference type="RefSeq" id="NP_001255305.1">
    <molecule id="Q9Y0A1-6"/>
    <property type="nucleotide sequence ID" value="NM_001268376.4"/>
</dbReference>
<dbReference type="RefSeq" id="NP_001367466.1">
    <molecule id="Q9Y0A1-5"/>
    <property type="nucleotide sequence ID" value="NM_001380339.2"/>
</dbReference>
<dbReference type="SMR" id="Q9Y0A1"/>
<dbReference type="BioGRID" id="42664">
    <property type="interactions" value="21"/>
</dbReference>
<dbReference type="FunCoup" id="Q9Y0A1">
    <property type="interactions" value="1508"/>
</dbReference>
<dbReference type="STRING" id="6239.F33D4.2a.1"/>
<dbReference type="TCDB" id="1.A.3.2.16">
    <property type="family name" value="the ryanodine-inositol 1,4,5-triphosphate receptor ca(2+) channel (rir-cac) family"/>
</dbReference>
<dbReference type="PaxDb" id="6239-F33D4.2a"/>
<dbReference type="PeptideAtlas" id="Q9Y0A1"/>
<dbReference type="EnsemblMetazoa" id="F33D4.2a.1">
    <molecule id="Q9Y0A1-1"/>
    <property type="protein sequence ID" value="F33D4.2a.1"/>
    <property type="gene ID" value="WBGene00002173"/>
</dbReference>
<dbReference type="EnsemblMetazoa" id="F33D4.2d.1">
    <molecule id="Q9Y0A1-2"/>
    <property type="protein sequence ID" value="F33D4.2d.1"/>
    <property type="gene ID" value="WBGene00002173"/>
</dbReference>
<dbReference type="EnsemblMetazoa" id="F33D4.2e.1">
    <molecule id="Q9Y0A1-3"/>
    <property type="protein sequence ID" value="F33D4.2e.1"/>
    <property type="gene ID" value="WBGene00002173"/>
</dbReference>
<dbReference type="EnsemblMetazoa" id="F33D4.2f.1">
    <molecule id="Q9Y0A1-4"/>
    <property type="protein sequence ID" value="F33D4.2f.1"/>
    <property type="gene ID" value="WBGene00002173"/>
</dbReference>
<dbReference type="EnsemblMetazoa" id="F33D4.2g.1">
    <molecule id="Q9Y0A1-5"/>
    <property type="protein sequence ID" value="F33D4.2g.1"/>
    <property type="gene ID" value="WBGene00002173"/>
</dbReference>
<dbReference type="EnsemblMetazoa" id="F33D4.2h.1">
    <molecule id="Q9Y0A1-6"/>
    <property type="protein sequence ID" value="F33D4.2h.1"/>
    <property type="gene ID" value="WBGene00002173"/>
</dbReference>
<dbReference type="GeneID" id="177546"/>
<dbReference type="KEGG" id="cel:CELE_F33D4.2"/>
<dbReference type="UCSC" id="F33D4.2a.2">
    <property type="organism name" value="c. elegans"/>
</dbReference>
<dbReference type="AGR" id="WB:WBGene00002173"/>
<dbReference type="CTD" id="177546"/>
<dbReference type="WormBase" id="F33D4.2a">
    <molecule id="Q9Y0A1-1"/>
    <property type="protein sequence ID" value="CE37905"/>
    <property type="gene ID" value="WBGene00002173"/>
    <property type="gene designation" value="itr-1"/>
</dbReference>
<dbReference type="WormBase" id="F33D4.2d">
    <molecule id="Q9Y0A1-2"/>
    <property type="protein sequence ID" value="CE37906"/>
    <property type="gene ID" value="WBGene00002173"/>
    <property type="gene designation" value="itr-1"/>
</dbReference>
<dbReference type="WormBase" id="F33D4.2e">
    <molecule id="Q9Y0A1-3"/>
    <property type="protein sequence ID" value="CE28017"/>
    <property type="gene ID" value="WBGene00002173"/>
    <property type="gene designation" value="itr-1"/>
</dbReference>
<dbReference type="WormBase" id="F33D4.2f">
    <molecule id="Q9Y0A1-4"/>
    <property type="protein sequence ID" value="CE28018"/>
    <property type="gene ID" value="WBGene00002173"/>
    <property type="gene designation" value="itr-1"/>
</dbReference>
<dbReference type="WormBase" id="F33D4.2g">
    <molecule id="Q9Y0A1-5"/>
    <property type="protein sequence ID" value="CE31690"/>
    <property type="gene ID" value="WBGene00002173"/>
    <property type="gene designation" value="itr-1"/>
</dbReference>
<dbReference type="WormBase" id="F33D4.2h">
    <molecule id="Q9Y0A1-6"/>
    <property type="protein sequence ID" value="CE44684"/>
    <property type="gene ID" value="WBGene00002173"/>
    <property type="gene designation" value="itr-1"/>
</dbReference>
<dbReference type="eggNOG" id="KOG3533">
    <property type="taxonomic scope" value="Eukaryota"/>
</dbReference>
<dbReference type="GeneTree" id="ENSGT00940000167397"/>
<dbReference type="InParanoid" id="Q9Y0A1"/>
<dbReference type="OMA" id="GSWLYIM"/>
<dbReference type="OrthoDB" id="76898at2759"/>
<dbReference type="PhylomeDB" id="Q9Y0A1"/>
<dbReference type="Reactome" id="R-CEL-114508">
    <property type="pathway name" value="Effects of PIP2 hydrolysis"/>
</dbReference>
<dbReference type="Reactome" id="R-CEL-139853">
    <property type="pathway name" value="Elevation of cytosolic Ca2+ levels"/>
</dbReference>
<dbReference type="Reactome" id="R-CEL-381676">
    <property type="pathway name" value="Glucagon-like Peptide-1 (GLP1) regulates insulin secretion"/>
</dbReference>
<dbReference type="Reactome" id="R-CEL-5578775">
    <property type="pathway name" value="Ion homeostasis"/>
</dbReference>
<dbReference type="Reactome" id="R-CEL-9717207">
    <property type="pathway name" value="Sensory perception of sweet, bitter, and umami (glutamate) taste"/>
</dbReference>
<dbReference type="Reactome" id="R-CEL-983695">
    <property type="pathway name" value="Antigen activates B Cell Receptor (BCR) leading to generation of second messengers"/>
</dbReference>
<dbReference type="PRO" id="PR:Q9Y0A1"/>
<dbReference type="Proteomes" id="UP000001940">
    <property type="component" value="Chromosome IV"/>
</dbReference>
<dbReference type="Bgee" id="WBGene00002173">
    <property type="expression patterns" value="Expressed in larva and 3 other cell types or tissues"/>
</dbReference>
<dbReference type="GO" id="GO:0005783">
    <property type="term" value="C:endoplasmic reticulum"/>
    <property type="evidence" value="ECO:0000314"/>
    <property type="project" value="WormBase"/>
</dbReference>
<dbReference type="GO" id="GO:0005789">
    <property type="term" value="C:endoplasmic reticulum membrane"/>
    <property type="evidence" value="ECO:0000318"/>
    <property type="project" value="GO_Central"/>
</dbReference>
<dbReference type="GO" id="GO:0016020">
    <property type="term" value="C:membrane"/>
    <property type="evidence" value="ECO:0000314"/>
    <property type="project" value="WormBase"/>
</dbReference>
<dbReference type="GO" id="GO:0005886">
    <property type="term" value="C:plasma membrane"/>
    <property type="evidence" value="ECO:0000318"/>
    <property type="project" value="GO_Central"/>
</dbReference>
<dbReference type="GO" id="GO:0016529">
    <property type="term" value="C:sarcoplasmic reticulum"/>
    <property type="evidence" value="ECO:0000318"/>
    <property type="project" value="GO_Central"/>
</dbReference>
<dbReference type="GO" id="GO:0030667">
    <property type="term" value="C:secretory granule membrane"/>
    <property type="evidence" value="ECO:0000318"/>
    <property type="project" value="GO_Central"/>
</dbReference>
<dbReference type="GO" id="GO:0005509">
    <property type="term" value="F:calcium ion binding"/>
    <property type="evidence" value="ECO:0000318"/>
    <property type="project" value="GO_Central"/>
</dbReference>
<dbReference type="GO" id="GO:0070679">
    <property type="term" value="F:inositol 1,4,5 trisphosphate binding"/>
    <property type="evidence" value="ECO:0000318"/>
    <property type="project" value="GO_Central"/>
</dbReference>
<dbReference type="GO" id="GO:0005220">
    <property type="term" value="F:inositol 1,4,5-trisphosphate-gated calcium channel activity"/>
    <property type="evidence" value="ECO:0000250"/>
    <property type="project" value="WormBase"/>
</dbReference>
<dbReference type="GO" id="GO:0017022">
    <property type="term" value="F:myosin binding"/>
    <property type="evidence" value="ECO:0000353"/>
    <property type="project" value="WormBase"/>
</dbReference>
<dbReference type="GO" id="GO:0035091">
    <property type="term" value="F:phosphatidylinositol binding"/>
    <property type="evidence" value="ECO:0000318"/>
    <property type="project" value="GO_Central"/>
</dbReference>
<dbReference type="GO" id="GO:0030421">
    <property type="term" value="P:defecation"/>
    <property type="evidence" value="ECO:0000315"/>
    <property type="project" value="WormBase"/>
</dbReference>
<dbReference type="GO" id="GO:0008340">
    <property type="term" value="P:determination of adult lifespan"/>
    <property type="evidence" value="ECO:0000315"/>
    <property type="project" value="UniProtKB"/>
</dbReference>
<dbReference type="GO" id="GO:0048598">
    <property type="term" value="P:embryonic morphogenesis"/>
    <property type="evidence" value="ECO:0000315"/>
    <property type="project" value="WormBase"/>
</dbReference>
<dbReference type="GO" id="GO:0060179">
    <property type="term" value="P:male mating behavior"/>
    <property type="evidence" value="ECO:0000315"/>
    <property type="project" value="WormBase"/>
</dbReference>
<dbReference type="GO" id="GO:0048609">
    <property type="term" value="P:multicellular organismal reproductive process"/>
    <property type="evidence" value="ECO:0000316"/>
    <property type="project" value="WormBase"/>
</dbReference>
<dbReference type="GO" id="GO:0006936">
    <property type="term" value="P:muscle contraction"/>
    <property type="evidence" value="ECO:0000315"/>
    <property type="project" value="WormBase"/>
</dbReference>
<dbReference type="GO" id="GO:0001556">
    <property type="term" value="P:oocyte maturation"/>
    <property type="evidence" value="ECO:0000316"/>
    <property type="project" value="WormBase"/>
</dbReference>
<dbReference type="GO" id="GO:0007204">
    <property type="term" value="P:positive regulation of cytosolic calcium ion concentration"/>
    <property type="evidence" value="ECO:0000314"/>
    <property type="project" value="WormBase"/>
</dbReference>
<dbReference type="GO" id="GO:1903746">
    <property type="term" value="P:positive regulation of nematode pharyngeal pumping"/>
    <property type="evidence" value="ECO:0000353"/>
    <property type="project" value="WormBase"/>
</dbReference>
<dbReference type="GO" id="GO:0012501">
    <property type="term" value="P:programmed cell death"/>
    <property type="evidence" value="ECO:0000316"/>
    <property type="project" value="WormBase"/>
</dbReference>
<dbReference type="GO" id="GO:0030334">
    <property type="term" value="P:regulation of cell migration"/>
    <property type="evidence" value="ECO:0000315"/>
    <property type="project" value="WormBase"/>
</dbReference>
<dbReference type="GO" id="GO:0051489">
    <property type="term" value="P:regulation of filopodium assembly"/>
    <property type="evidence" value="ECO:0000315"/>
    <property type="project" value="WormBase"/>
</dbReference>
<dbReference type="GO" id="GO:0043051">
    <property type="term" value="P:regulation of nematode pharyngeal pumping"/>
    <property type="evidence" value="ECO:0000315"/>
    <property type="project" value="WormBase"/>
</dbReference>
<dbReference type="GO" id="GO:0051209">
    <property type="term" value="P:release of sequestered calcium ion into cytosol"/>
    <property type="evidence" value="ECO:0000318"/>
    <property type="project" value="GO_Central"/>
</dbReference>
<dbReference type="GO" id="GO:0007622">
    <property type="term" value="P:rhythmic behavior"/>
    <property type="evidence" value="ECO:0000315"/>
    <property type="project" value="WormBase"/>
</dbReference>
<dbReference type="GO" id="GO:0042713">
    <property type="term" value="P:sperm ejaculation"/>
    <property type="evidence" value="ECO:0000315"/>
    <property type="project" value="WormBase"/>
</dbReference>
<dbReference type="FunFam" id="2.80.10.50:FF:000073">
    <property type="entry name" value="Inositol 1,4,5-trisphosphate receptor itr-1"/>
    <property type="match status" value="1"/>
</dbReference>
<dbReference type="FunFam" id="1.25.10.30:FF:000003">
    <property type="entry name" value="Protein CBR-ITR-1, isoform a"/>
    <property type="match status" value="1"/>
</dbReference>
<dbReference type="Gene3D" id="1.10.287.70">
    <property type="match status" value="1"/>
</dbReference>
<dbReference type="Gene3D" id="2.80.10.50">
    <property type="match status" value="2"/>
</dbReference>
<dbReference type="Gene3D" id="1.25.10.30">
    <property type="entry name" value="IP3 receptor type 1 binding core, RIH domain"/>
    <property type="match status" value="1"/>
</dbReference>
<dbReference type="InterPro" id="IPR014821">
    <property type="entry name" value="Ins145_P3_rcpt"/>
</dbReference>
<dbReference type="InterPro" id="IPR000493">
    <property type="entry name" value="InsP3_rcpt"/>
</dbReference>
<dbReference type="InterPro" id="IPR005821">
    <property type="entry name" value="Ion_trans_dom"/>
</dbReference>
<dbReference type="InterPro" id="IPR036300">
    <property type="entry name" value="MIR_dom_sf"/>
</dbReference>
<dbReference type="InterPro" id="IPR016093">
    <property type="entry name" value="MIR_motif"/>
</dbReference>
<dbReference type="InterPro" id="IPR013662">
    <property type="entry name" value="RIH_assoc-dom"/>
</dbReference>
<dbReference type="InterPro" id="IPR000699">
    <property type="entry name" value="RIH_dom"/>
</dbReference>
<dbReference type="InterPro" id="IPR015925">
    <property type="entry name" value="Ryanodine_IP3_receptor"/>
</dbReference>
<dbReference type="InterPro" id="IPR035910">
    <property type="entry name" value="RyR/IP3R_RIH_dom_sf"/>
</dbReference>
<dbReference type="PANTHER" id="PTHR13715:SF102">
    <property type="entry name" value="INOSITOL 1,4,5-TRISPHOSPHATE RECEPTOR"/>
    <property type="match status" value="1"/>
</dbReference>
<dbReference type="PANTHER" id="PTHR13715">
    <property type="entry name" value="RYANODINE RECEPTOR AND IP3 RECEPTOR"/>
    <property type="match status" value="1"/>
</dbReference>
<dbReference type="Pfam" id="PF08709">
    <property type="entry name" value="Ins145_P3_rec"/>
    <property type="match status" value="1"/>
</dbReference>
<dbReference type="Pfam" id="PF00520">
    <property type="entry name" value="Ion_trans"/>
    <property type="match status" value="1"/>
</dbReference>
<dbReference type="Pfam" id="PF02815">
    <property type="entry name" value="MIR"/>
    <property type="match status" value="1"/>
</dbReference>
<dbReference type="Pfam" id="PF08454">
    <property type="entry name" value="RIH_assoc"/>
    <property type="match status" value="1"/>
</dbReference>
<dbReference type="Pfam" id="PF01365">
    <property type="entry name" value="RYDR_ITPR"/>
    <property type="match status" value="2"/>
</dbReference>
<dbReference type="PRINTS" id="PR00779">
    <property type="entry name" value="INSP3RECEPTR"/>
</dbReference>
<dbReference type="SMART" id="SM00472">
    <property type="entry name" value="MIR"/>
    <property type="match status" value="3"/>
</dbReference>
<dbReference type="SUPFAM" id="SSF100909">
    <property type="entry name" value="IP3 receptor type 1 binding core, domain 2"/>
    <property type="match status" value="2"/>
</dbReference>
<dbReference type="SUPFAM" id="SSF82109">
    <property type="entry name" value="MIR domain"/>
    <property type="match status" value="2"/>
</dbReference>
<dbReference type="PROSITE" id="PS50919">
    <property type="entry name" value="MIR"/>
    <property type="match status" value="4"/>
</dbReference>
<organism>
    <name type="scientific">Caenorhabditis elegans</name>
    <dbReference type="NCBI Taxonomy" id="6239"/>
    <lineage>
        <taxon>Eukaryota</taxon>
        <taxon>Metazoa</taxon>
        <taxon>Ecdysozoa</taxon>
        <taxon>Nematoda</taxon>
        <taxon>Chromadorea</taxon>
        <taxon>Rhabditida</taxon>
        <taxon>Rhabditina</taxon>
        <taxon>Rhabditomorpha</taxon>
        <taxon>Rhabditoidea</taxon>
        <taxon>Rhabditidae</taxon>
        <taxon>Peloderinae</taxon>
        <taxon>Caenorhabditis</taxon>
    </lineage>
</organism>
<keyword id="KW-0877">Alternative promoter usage</keyword>
<keyword id="KW-0025">Alternative splicing</keyword>
<keyword id="KW-0217">Developmental protein</keyword>
<keyword id="KW-0256">Endoplasmic reticulum</keyword>
<keyword id="KW-0407">Ion channel</keyword>
<keyword id="KW-0406">Ion transport</keyword>
<keyword id="KW-1071">Ligand-gated ion channel</keyword>
<keyword id="KW-0472">Membrane</keyword>
<keyword id="KW-0675">Receptor</keyword>
<keyword id="KW-1185">Reference proteome</keyword>
<keyword id="KW-0677">Repeat</keyword>
<keyword id="KW-0812">Transmembrane</keyword>
<keyword id="KW-1133">Transmembrane helix</keyword>
<keyword id="KW-0813">Transport</keyword>
<accession>Q9Y0A1</accession>
<accession>D3NQ87</accession>
<accession>G5EBF6</accession>
<accession>Q8MXI9</accession>
<accession>Q9U3B3</accession>
<accession>Q9Y0A0</accession>
<sequence length="2892" mass="330837">MNPSYGRVRKKVSIISIPEFVPEHYEYENETTASGGASGGGSTRIEFDFDDFEEQIMRKSSMALPSRKLTIANSIDHGNNGNLHIGDIISLYTESSSNQEQRGFLSTLGLVDDRCIVELKDGRPESPPKKFRDCLFKVCPVNRYAAQKHLWTEQKRFQTGDSMFDDDLMNKLKVAADKEREENESEFQKTLGNVIQYGSMVQLLHVKSNKYITVQKNSPAKRERNAMKVYLDRAGNEGSWFIIEPAYKHYAIGDNVSAGNKISLIPNSVSTTQAGHVKSQLHLSSFNLLDHQSAAEVNCLNEPTEWQVFMFLLFDENQQNSVKSGDVVRLFHADQQTFLTLDTIPKQNPPTDVVFLRMTNRPSAADATSSRALWEVQVVQTNAYRGGTAKWNKAYRFKHLATDMYLSAEPSQVQVKPAMNGRRASLIYSKTNNPMAMYSDGPNGVTNESTDTTQQNIPSVWVLGPTKSEFPEEDANLLFQLDPSTFMKSNKEVPRRSYVRLLHQSSDKWVHATNATEKQNLHYSSKNEKGWVKVICEKNRVDKETFALLPVNPDEVRDLDFANDACKALRNFIKLIKIGQVISKESINSTTQLLIDCILFVTNSSDHLADPLKISDFSPSRDRQKLLREQEVLNQVFLLLKAPFLPRQGTTELGPLLSSPSELSDSRNEIFKTMFQLCYCLLKYSQVSYRKNQEFLAEKFGEIQEQIGFDLMAEDTMTAVLHNNPKLLEKYVKTPHVERFVELVRNNRQGKFLDYLADLCVCRGEANKKIQELICTSVLSSKHRDIFMDTKIIDGEIEVGWAPNFRKLVDIAEGAKSNSDDAEHLDYYRHQLDLLSQMCQEQQYLAIDPPPERRLMNISQQLPAELVLQCMSDNRLPYDLRGSFTRLMLHLHVVRGSPMSAIRHARLWWSIPENVNVSTYESVSVEAYSDGSRMRIGEGIAHKVLATVETYLMGLRNQSMEERQSVNSSKLTYEIVNLAKALAQFNFYSFNDLLQLTQNLLAIINEGPATEQVPSHRAMVNAIRNMSKSMMRGGNKENSKDLAKTPSVTAEEAGRTKEGRALNVKTKLIVAEILQFVMDVRRDYRITMALSWFKNVFPCDEDGSLMHSASINERMASELYDAIYRSSGHELHLDGRDGQLLLAILLQMTMSDYPPLTSIALKVFFRHFTQYQELLEDLKQVQLLVSNNDVENYRQIDRDLFILKNLTEKSELWVHGDRHHSIDTKEVDEKERTTEHDLLDHDLKSPRAFDSGDSMEALMAVLNEHYPSIRNECLQLLNRLLIKDDRNDAAVALQELSDKAPLIAYPLIRQMLVRLTGMCYRKGDPKPDTMNQQLLKNMRVYEVVLEFISVPHDKKHDHDMMKLITLSHEFLRSFCKTNKENQSRLYKFISYEKDAKEGMLRVETIEEVGTLVAIFRNNRELASNVPEELIAHIVGLIEHNSRNPIFLELLQALVCVYDKEIESGQEKVANEICAASDEVRQLYVDNASFEELEAMMKDEKESKGRSSDSRRKLKYHIELVRLLAMCTRGKNGNTELKCASQIPMDHIVRVVTAKQCLVEVKTVYLQLLLHCYIDTDAEMKDAYKTEYVDHILNNLLEDIRSLRVEKLTGAETATLEHYICHTVTEVLIKFFEAPYSALQQAKVDVHHHKKTFSEVLLELTYLEKGKLRGSKSSRNWYRVAECIKRLTKWAEEHNITLPATLAGPQMSGQTSVRQKWQQAASSAKWIGIGKRLNRQNTLNPGHRLYGTSNSMTEHTSANVVTCYHMMIGEFKFYLHPLHAAEGSVLVEVLHTPELLFPEGSALRDQCARGGVVAKLIQHCKTLMQNKQDNLCARVLQTLCKMCDCTKQQLTHQGQQLRQLLLQRYFGHHNNHHPPLDRQQSKIGEVIEAVKEKKEETWSQERDLYAIQCKLNDAGASDLVTDIIIMEPSREIFLKAIHLARALLHEGNDKVQHSFYMRMKQKDIHEPFFKAILTRIQTAQNRLKSDMMSCSDSKPKVSLSATVSRRSSTVLTPLIDAGDTGFNGALFEVPQQVRHPSISEMSQLSNDLTHSIPDLAPYQDEEKSTDALPPEVALVEPILRVLQLLCENHNSLLQNFLRKQSDRTNHNLVSETLSFLDTVCGSTKGSLGVFGEIGEHNFSLITQTLATLTEFCQGPCHENQNTMAMQENGLNIIISLVLNEIKPLADDHMELALEIKSQASKLLLAIMESRHDGENANRVLRNMANMSGGPKQLVHAIKQAYEMTNSNHHMLKSISRDLFRQAEDDLKKKSGPQITVNTVTLPEINVDASGIVSIHTEKNISSSLDDKFNDDDIPSVDPREVGHNIYILAHQLAIHDGELEIWLDGSDEKKDDLTREALNYYKERTAQIEIVRRDRTLERVVFPINDICSYLTKDTKDYVYNNTERDNQGSKVTEFFDEWETMYHEMIWQRKLQDRKWLSWCAFRLPLWTRLSFHFAFIVNALVARYYPLPEHSNSSISLGNLYSWFAVFSSFLLAHYLRHDKIYLHKTSLLILASLCFLLLSSIGVTLTLYIFGILQLVNKIVHVVAFVSNKGLEDRPIAEILACRNLHYLLVYLFICILGLLVHPMIYCILLFDIIFTEETLQNVIASVTRNYQSIVWTGLLALILLYFFSILGFLYFRHDFYLEVDPVENDSSATISSGIPSETCPSEGCPGLQPSEKDDNDDEKKVKSCETLWMCILQTGYQGLRNGGGIGDVLRNPAPWEDMFIWRVAYDMTFFVVLIVIVLNLIFGVIIDTFGDLRAEKNEKEQILKNNCFICGLDRSRFDNRSVTFETHRETEHNIWHYLYYIVMLQIKDETEFTGPESYVAQCVKDRNLDWFPRMQALSLQDSELDTDQSEVKQMKDQLLQMMTLMREIISQNEESRAFMEQFQPR</sequence>
<reference evidence="27 28" key="1">
    <citation type="journal article" date="1999" name="Cell">
        <title>The inositol trisphosphate receptor regulates a 50-second behavioral rhythm in C. elegans.</title>
        <authorList>
            <person name="Dal Santo P."/>
            <person name="Logan M.A."/>
            <person name="Chisholm A.D."/>
            <person name="Jorgensen E.M."/>
        </authorList>
    </citation>
    <scope>NUCLEOTIDE SEQUENCE [MRNA] (ISOFORM F)</scope>
    <scope>FUNCTION</scope>
    <scope>TISSUE SPECIFICITY</scope>
    <scope>MUTAGENESIS OF GLY-103 AND CYS-1571</scope>
    <source>
        <strain evidence="5">Bristol N2</strain>
    </source>
</reference>
<reference evidence="27 29" key="2">
    <citation type="journal article" date="1999" name="J. Mol. Biol.">
        <title>Inositol 1,4,5-trisphosphate receptors are strongly expressed in the nervous system, pharynx, intestine, gonad and excretory cell of Caenorhabditis elegans and are encoded by a single gene (itr-1).</title>
        <authorList>
            <person name="Baylis H.A."/>
            <person name="Furuichi T."/>
            <person name="Yoshikawa F."/>
            <person name="Mikoshiba K."/>
            <person name="Sattelle D.B."/>
        </authorList>
    </citation>
    <scope>NUCLEOTIDE SEQUENCE [MRNA] (ISOFORMS A; D; E AND F)</scope>
    <scope>FUNCTION</scope>
    <scope>SUBCELLULAR LOCATION</scope>
    <scope>TISSUE SPECIFICITY</scope>
    <scope>DOMAIN</scope>
    <source>
        <strain evidence="29">Bristol N2</strain>
    </source>
</reference>
<reference evidence="30" key="3">
    <citation type="journal article" date="1998" name="Science">
        <title>Genome sequence of the nematode C. elegans: a platform for investigating biology.</title>
        <authorList>
            <consortium name="The C. elegans sequencing consortium"/>
        </authorList>
    </citation>
    <scope>NUCLEOTIDE SEQUENCE [LARGE SCALE GENOMIC DNA]</scope>
    <source>
        <strain evidence="30">Bristol N2</strain>
    </source>
</reference>
<reference evidence="27" key="4">
    <citation type="journal article" date="1998" name="Cell">
        <title>Inositol trisphosphate mediates a RAS-independent response to LET-23 receptor tyrosine kinase activation in C. elegans.</title>
        <authorList>
            <person name="Clandinin T.R."/>
            <person name="DeModena J.A."/>
            <person name="Sternberg P.W."/>
        </authorList>
    </citation>
    <scope>FUNCTION</scope>
    <scope>MUTAGENESIS OF ARG-371; ARG-557 AND SER-900</scope>
</reference>
<reference evidence="27" key="5">
    <citation type="journal article" date="2001" name="J. Mol. Biol.">
        <title>Dissection of the promoter region of the inositol 1,4,5-trisphosphate receptor gene, itr-1, in C. elegans: a molecular basis for cell-specific expression of IP3R isoforms.</title>
        <authorList>
            <person name="Gower N.J."/>
            <person name="Temple G.R."/>
            <person name="Schein J.E."/>
            <person name="Marra M."/>
            <person name="Walker D.S."/>
            <person name="Baylis H.A."/>
        </authorList>
    </citation>
    <scope>ALTERNATIVE SPLICING</scope>
    <scope>ALTERNATIVE PROMOTER USAGE</scope>
    <scope>TISSUE SPECIFICITY</scope>
</reference>
<reference evidence="27" key="6">
    <citation type="journal article" date="2001" name="Mol. Biol. Cell">
        <title>Calreticulin, a calcium-binding molecular chaperone, is required for stress response and fertility in Caenorhabditis elegans.</title>
        <authorList>
            <person name="Park B.J."/>
            <person name="Lee D.G."/>
            <person name="Yu J.R."/>
            <person name="Jung S.K."/>
            <person name="Choi K."/>
            <person name="Lee J."/>
            <person name="Lee J."/>
            <person name="Kim Y.S."/>
            <person name="Lee J.I."/>
            <person name="Kwon J.Y."/>
            <person name="Lee J."/>
            <person name="Singson A."/>
            <person name="Song W.K."/>
            <person name="Eom S.H."/>
            <person name="Park C.S."/>
            <person name="Kim D.H."/>
            <person name="Bandyopadhyay J."/>
            <person name="Ahnn J."/>
        </authorList>
    </citation>
    <scope>FUNCTION</scope>
    <scope>MUTAGENESIS OF ARG-371; SER-900 AND CYS-1571</scope>
</reference>
<reference evidence="27" key="7">
    <citation type="journal article" date="2002" name="Curr. Biol.">
        <title>A direct interaction between IP(3) receptors and myosin II regulates IP(3) signaling in C. elegans.</title>
        <authorList>
            <person name="Walker D.S."/>
            <person name="Ly S."/>
            <person name="Lockwood K.C."/>
            <person name="Baylis H.A."/>
        </authorList>
    </citation>
    <scope>FUNCTION</scope>
    <scope>INTERACTION WITH MYO-1; MYO-2; UNC-54 AND NMY-2</scope>
</reference>
<reference evidence="27" key="8">
    <citation type="journal article" date="2002" name="Mol. Biol. Cell">
        <title>Regulated disruption of inositol 1,4,5-trisphosphate signaling in Caenorhabditis elegans reveals new functions in feeding and embryogenesis.</title>
        <authorList>
            <person name="Walker D.S."/>
            <person name="Gower N.J."/>
            <person name="Ly S."/>
            <person name="Bradley G.L."/>
            <person name="Baylis H.A."/>
        </authorList>
    </citation>
    <scope>FUNCTION</scope>
    <scope>DISRUPTION PHENOTYPE</scope>
    <scope>MUTAGENESIS OF ARG-557; LYS-625; ARG-628 AND CYS-1571</scope>
</reference>
<reference evidence="27" key="9">
    <citation type="journal article" date="2004" name="Curr. Biol.">
        <title>The inositol 1,4,5-trisphosphate receptor regulates epidermal cell migration in Caenorhabditis elegans.</title>
        <authorList>
            <person name="Thomas-Virnig C.L."/>
            <person name="Sims P.A."/>
            <person name="Simske J.S."/>
            <person name="Hardin J."/>
        </authorList>
    </citation>
    <scope>FUNCTION</scope>
    <scope>SUBCELLULAR LOCATION</scope>
    <scope>TISSUE SPECIFICITY</scope>
</reference>
<reference key="10">
    <citation type="journal article" date="2004" name="FEBS Lett.">
        <title>SHN-1, a Shank homologue in C. elegans, affects defecation rhythm via the inositol-1,4,5-trisphosphate receptor.</title>
        <authorList>
            <person name="Jee C."/>
            <person name="Lee J."/>
            <person name="Lee J.I."/>
            <person name="Lee W.H."/>
            <person name="Park B.J."/>
            <person name="Yu J.R."/>
            <person name="Park E."/>
            <person name="Kim E."/>
            <person name="Ahnn J."/>
        </authorList>
    </citation>
    <scope>FUNCTION</scope>
    <scope>MUTAGENESIS OF CYS-1571</scope>
</reference>
<reference key="11">
    <citation type="journal article" date="2004" name="Mol. Biol. Cell">
        <title>IRI-1, a LIN-15B homologue, interacts with inositol-1,4,5-triphosphate receptors and regulates gonadogenesis, defecation, and pharyngeal pumping in Caenorhabditis elegans.</title>
        <authorList>
            <person name="Walker D.S."/>
            <person name="Ly S."/>
            <person name="Gower N.J."/>
            <person name="Baylis H.A."/>
        </authorList>
    </citation>
    <scope>FUNCTION</scope>
    <scope>INTERACTION WITH IRI-1</scope>
</reference>
<reference key="12">
    <citation type="journal article" date="2004" name="Mol. Biol. Cell">
        <title>Inositol 1,4,5-trisphosphate signaling regulates rhythmic contractile activity of myoepithelial sheath cells in Caenorhabditis elegans.</title>
        <authorList>
            <person name="Yin X."/>
            <person name="Gower N.J."/>
            <person name="Baylis H.A."/>
            <person name="Strange K."/>
        </authorList>
    </citation>
    <scope>FUNCTION</scope>
    <scope>DISRUPTION PHENOTYPE</scope>
    <scope>MUTAGENESIS OF LEU-945 AND CYS-1571</scope>
</reference>
<reference key="13">
    <citation type="journal article" date="2005" name="Development">
        <title>Eph and NMDA receptors control Ca2+/calmodulin-dependent protein kinase II activation during C. elegans oocyte meiotic maturation.</title>
        <authorList>
            <person name="Corrigan C."/>
            <person name="Subramanian R."/>
            <person name="Miller M.A."/>
        </authorList>
    </citation>
    <scope>FUNCTION</scope>
</reference>
<reference key="14">
    <citation type="journal article" date="2005" name="J. Gen. Physiol.">
        <title>Oscillatory Ca2+ signaling in the isolated Caenorhabditis elegans intestine: role of the inositol-1,4,5-trisphosphate receptor and phospholipases C beta and gamma.</title>
        <authorList>
            <person name="Espelt M.V."/>
            <person name="Estevez A.Y."/>
            <person name="Yin X."/>
            <person name="Strange K."/>
        </authorList>
    </citation>
    <scope>FUNCTION</scope>
    <scope>MUTAGENESIS OF ARG-557; LEU-945 AND CYS-1571</scope>
</reference>
<reference key="15">
    <citation type="journal article" date="2005" name="Mol. Biol. Cell">
        <title>Inositol 1,4,5-trisphosphate signaling regulates mating behavior in Caenorhabditis elegans males.</title>
        <authorList>
            <person name="Gower N.J."/>
            <person name="Walker D.S."/>
            <person name="Baylis H.A."/>
        </authorList>
    </citation>
    <scope>FUNCTION</scope>
    <scope>TISSUE SPECIFICITY</scope>
    <scope>DISRUPTION PHENOTYPE</scope>
    <scope>MUTAGENESIS OF CYS-1571</scope>
</reference>
<reference key="16">
    <citation type="journal article" date="2008" name="PLoS Genet.">
        <title>Phospholipase C-epsilon regulates epidermal morphogenesis in Caenorhabditis elegans.</title>
        <authorList>
            <person name="Vazquez-Manrique R.P."/>
            <person name="Nagy A.I."/>
            <person name="Legg J.C."/>
            <person name="Bales O.A."/>
            <person name="Ly S."/>
            <person name="Baylis H.A."/>
        </authorList>
    </citation>
    <scope>FUNCTION</scope>
</reference>
<reference key="17">
    <citation type="journal article" date="2009" name="PLoS Genet.">
        <title>Inositol 1,4,5-trisphosphate signalling regulates the avoidance response to nose touch in Caenorhabditis elegans.</title>
        <authorList>
            <person name="Walker D.S."/>
            <person name="Vazquez-Manrique R.P."/>
            <person name="Gower N.J."/>
            <person name="Gregory E."/>
            <person name="Schafer W.R."/>
            <person name="Baylis H.A."/>
        </authorList>
    </citation>
    <scope>FUNCTION</scope>
    <scope>DISRUPTION PHENOTYPE</scope>
    <scope>MUTAGENESIS OF CYS-1571</scope>
</reference>
<reference key="18">
    <citation type="journal article" date="2011" name="Mol. Cells">
        <title>ANK repeat-domain of SHN-1 is indispensable for in vivo SHN-1 function in C. elegans.</title>
        <authorList>
            <person name="Oh W.C."/>
            <person name="Song H.O."/>
            <person name="Cho J.H."/>
            <person name="Park B.J."/>
        </authorList>
    </citation>
    <scope>FUNCTION</scope>
</reference>
<reference key="19">
    <citation type="journal article" date="2013" name="PLoS Genet.">
        <title>Filamin and phospholipase C-epsilon are required for calcium signaling in the Caenorhabditis elegans spermatheca.</title>
        <authorList>
            <person name="Kovacevic I."/>
            <person name="Orozco J.M."/>
            <person name="Cram E.J."/>
        </authorList>
    </citation>
    <scope>FUNCTION</scope>
</reference>
<reference key="20">
    <citation type="journal article" date="2020" name="Cell Rep.">
        <title>Atf-6 Regulates Lifespan through ER-Mitochondrial Calcium Homeostasis.</title>
        <authorList>
            <person name="Burkewitz K."/>
            <person name="Feng G."/>
            <person name="Dutta S."/>
            <person name="Kelley C.A."/>
            <person name="Steinbaugh M."/>
            <person name="Cram E.J."/>
            <person name="Mair W.B."/>
        </authorList>
    </citation>
    <scope>FUNCTION</scope>
    <scope>MUTAGENESIS OF ARG-557 AND CYS-1571</scope>
</reference>